<evidence type="ECO:0000250" key="1">
    <source>
        <dbReference type="UniProtKB" id="P40991"/>
    </source>
</evidence>
<evidence type="ECO:0000250" key="2">
    <source>
        <dbReference type="UniProtKB" id="P46087"/>
    </source>
</evidence>
<evidence type="ECO:0000250" key="3">
    <source>
        <dbReference type="UniProtKB" id="Q9FG73"/>
    </source>
</evidence>
<evidence type="ECO:0000255" key="4">
    <source>
        <dbReference type="PROSITE-ProRule" id="PRU00161"/>
    </source>
</evidence>
<evidence type="ECO:0000255" key="5">
    <source>
        <dbReference type="PROSITE-ProRule" id="PRU01023"/>
    </source>
</evidence>
<evidence type="ECO:0000256" key="6">
    <source>
        <dbReference type="SAM" id="MobiDB-lite"/>
    </source>
</evidence>
<evidence type="ECO:0000269" key="7">
    <source>
    </source>
</evidence>
<evidence type="ECO:0000303" key="8">
    <source>
    </source>
</evidence>
<evidence type="ECO:0000303" key="9">
    <source>
    </source>
</evidence>
<evidence type="ECO:0000305" key="10"/>
<evidence type="ECO:0000312" key="11">
    <source>
        <dbReference type="Araport" id="AT1G06560"/>
    </source>
</evidence>
<evidence type="ECO:0000312" key="12">
    <source>
        <dbReference type="EMBL" id="AAF24825.1"/>
    </source>
</evidence>
<evidence type="ECO:0000312" key="13">
    <source>
        <dbReference type="EMBL" id="AAF24826.1"/>
    </source>
</evidence>
<reference key="1">
    <citation type="journal article" date="2000" name="Nature">
        <title>Sequence and analysis of chromosome 1 of the plant Arabidopsis thaliana.</title>
        <authorList>
            <person name="Theologis A."/>
            <person name="Ecker J.R."/>
            <person name="Palm C.J."/>
            <person name="Federspiel N.A."/>
            <person name="Kaul S."/>
            <person name="White O."/>
            <person name="Alonso J."/>
            <person name="Altafi H."/>
            <person name="Araujo R."/>
            <person name="Bowman C.L."/>
            <person name="Brooks S.Y."/>
            <person name="Buehler E."/>
            <person name="Chan A."/>
            <person name="Chao Q."/>
            <person name="Chen H."/>
            <person name="Cheuk R.F."/>
            <person name="Chin C.W."/>
            <person name="Chung M.K."/>
            <person name="Conn L."/>
            <person name="Conway A.B."/>
            <person name="Conway A.R."/>
            <person name="Creasy T.H."/>
            <person name="Dewar K."/>
            <person name="Dunn P."/>
            <person name="Etgu P."/>
            <person name="Feldblyum T.V."/>
            <person name="Feng J.-D."/>
            <person name="Fong B."/>
            <person name="Fujii C.Y."/>
            <person name="Gill J.E."/>
            <person name="Goldsmith A.D."/>
            <person name="Haas B."/>
            <person name="Hansen N.F."/>
            <person name="Hughes B."/>
            <person name="Huizar L."/>
            <person name="Hunter J.L."/>
            <person name="Jenkins J."/>
            <person name="Johnson-Hopson C."/>
            <person name="Khan S."/>
            <person name="Khaykin E."/>
            <person name="Kim C.J."/>
            <person name="Koo H.L."/>
            <person name="Kremenetskaia I."/>
            <person name="Kurtz D.B."/>
            <person name="Kwan A."/>
            <person name="Lam B."/>
            <person name="Langin-Hooper S."/>
            <person name="Lee A."/>
            <person name="Lee J.M."/>
            <person name="Lenz C.A."/>
            <person name="Li J.H."/>
            <person name="Li Y.-P."/>
            <person name="Lin X."/>
            <person name="Liu S.X."/>
            <person name="Liu Z.A."/>
            <person name="Luros J.S."/>
            <person name="Maiti R."/>
            <person name="Marziali A."/>
            <person name="Militscher J."/>
            <person name="Miranda M."/>
            <person name="Nguyen M."/>
            <person name="Nierman W.C."/>
            <person name="Osborne B.I."/>
            <person name="Pai G."/>
            <person name="Peterson J."/>
            <person name="Pham P.K."/>
            <person name="Rizzo M."/>
            <person name="Rooney T."/>
            <person name="Rowley D."/>
            <person name="Sakano H."/>
            <person name="Salzberg S.L."/>
            <person name="Schwartz J.R."/>
            <person name="Shinn P."/>
            <person name="Southwick A.M."/>
            <person name="Sun H."/>
            <person name="Tallon L.J."/>
            <person name="Tambunga G."/>
            <person name="Toriumi M.J."/>
            <person name="Town C.D."/>
            <person name="Utterback T."/>
            <person name="Van Aken S."/>
            <person name="Vaysberg M."/>
            <person name="Vysotskaia V.S."/>
            <person name="Walker M."/>
            <person name="Wu D."/>
            <person name="Yu G."/>
            <person name="Fraser C.M."/>
            <person name="Venter J.C."/>
            <person name="Davis R.W."/>
        </authorList>
    </citation>
    <scope>NUCLEOTIDE SEQUENCE [LARGE SCALE GENOMIC DNA]</scope>
    <source>
        <strain>cv. Columbia</strain>
    </source>
</reference>
<reference key="2">
    <citation type="journal article" date="2017" name="Plant J.">
        <title>Araport11: a complete reannotation of the Arabidopsis thaliana reference genome.</title>
        <authorList>
            <person name="Cheng C.Y."/>
            <person name="Krishnakumar V."/>
            <person name="Chan A.P."/>
            <person name="Thibaud-Nissen F."/>
            <person name="Schobel S."/>
            <person name="Town C.D."/>
        </authorList>
    </citation>
    <scope>GENOME REANNOTATION</scope>
    <source>
        <strain>cv. Columbia</strain>
    </source>
</reference>
<reference key="3">
    <citation type="journal article" date="2003" name="Science">
        <title>Empirical analysis of transcriptional activity in the Arabidopsis genome.</title>
        <authorList>
            <person name="Yamada K."/>
            <person name="Lim J."/>
            <person name="Dale J.M."/>
            <person name="Chen H."/>
            <person name="Shinn P."/>
            <person name="Palm C.J."/>
            <person name="Southwick A.M."/>
            <person name="Wu H.C."/>
            <person name="Kim C.J."/>
            <person name="Nguyen M."/>
            <person name="Pham P.K."/>
            <person name="Cheuk R.F."/>
            <person name="Karlin-Newmann G."/>
            <person name="Liu S.X."/>
            <person name="Lam B."/>
            <person name="Sakano H."/>
            <person name="Wu T."/>
            <person name="Yu G."/>
            <person name="Miranda M."/>
            <person name="Quach H.L."/>
            <person name="Tripp M."/>
            <person name="Chang C.H."/>
            <person name="Lee J.M."/>
            <person name="Toriumi M.J."/>
            <person name="Chan M.M."/>
            <person name="Tang C.C."/>
            <person name="Onodera C.S."/>
            <person name="Deng J.M."/>
            <person name="Akiyama K."/>
            <person name="Ansari Y."/>
            <person name="Arakawa T."/>
            <person name="Banh J."/>
            <person name="Banno F."/>
            <person name="Bowser L."/>
            <person name="Brooks S.Y."/>
            <person name="Carninci P."/>
            <person name="Chao Q."/>
            <person name="Choy N."/>
            <person name="Enju A."/>
            <person name="Goldsmith A.D."/>
            <person name="Gurjal M."/>
            <person name="Hansen N.F."/>
            <person name="Hayashizaki Y."/>
            <person name="Johnson-Hopson C."/>
            <person name="Hsuan V.W."/>
            <person name="Iida K."/>
            <person name="Karnes M."/>
            <person name="Khan S."/>
            <person name="Koesema E."/>
            <person name="Ishida J."/>
            <person name="Jiang P.X."/>
            <person name="Jones T."/>
            <person name="Kawai J."/>
            <person name="Kamiya A."/>
            <person name="Meyers C."/>
            <person name="Nakajima M."/>
            <person name="Narusaka M."/>
            <person name="Seki M."/>
            <person name="Sakurai T."/>
            <person name="Satou M."/>
            <person name="Tamse R."/>
            <person name="Vaysberg M."/>
            <person name="Wallender E.K."/>
            <person name="Wong C."/>
            <person name="Yamamura Y."/>
            <person name="Yuan S."/>
            <person name="Shinozaki K."/>
            <person name="Davis R.W."/>
            <person name="Theologis A."/>
            <person name="Ecker J.R."/>
        </authorList>
    </citation>
    <scope>NUCLEOTIDE SEQUENCE [LARGE SCALE MRNA]</scope>
    <source>
        <strain>cv. Columbia</strain>
    </source>
</reference>
<reference key="4">
    <citation type="submission" date="2006-07" db="EMBL/GenBank/DDBJ databases">
        <title>Large-scale analysis of RIKEN Arabidopsis full-length (RAFL) cDNAs.</title>
        <authorList>
            <person name="Totoki Y."/>
            <person name="Seki M."/>
            <person name="Ishida J."/>
            <person name="Nakajima M."/>
            <person name="Enju A."/>
            <person name="Kamiya A."/>
            <person name="Narusaka M."/>
            <person name="Shin-i T."/>
            <person name="Nakagawa M."/>
            <person name="Sakamoto N."/>
            <person name="Oishi K."/>
            <person name="Kohara Y."/>
            <person name="Kobayashi M."/>
            <person name="Toyoda A."/>
            <person name="Sakaki Y."/>
            <person name="Sakurai T."/>
            <person name="Iida K."/>
            <person name="Akiyama K."/>
            <person name="Satou M."/>
            <person name="Toyoda T."/>
            <person name="Konagaya A."/>
            <person name="Carninci P."/>
            <person name="Kawai J."/>
            <person name="Hayashizaki Y."/>
            <person name="Shinozaki K."/>
        </authorList>
    </citation>
    <scope>NUCLEOTIDE SEQUENCE [LARGE SCALE MRNA]</scope>
    <source>
        <strain>cv. Columbia</strain>
    </source>
</reference>
<reference key="5">
    <citation type="journal article" date="2015" name="BMC Plant Biol.">
        <title>Conservation of tRNA and rRNA 5-methylcytosine in the kingdom Plantae.</title>
        <authorList>
            <person name="Burgess A.L."/>
            <person name="David R."/>
            <person name="Searle I.R."/>
        </authorList>
    </citation>
    <scope>DISRUPTION PHENOTYPE</scope>
    <source>
        <strain>cv. Columbia</strain>
    </source>
</reference>
<reference key="6">
    <citation type="journal article" date="2017" name="BMC Plant Biol.">
        <title>Identification of tRNA nucleoside modification genes critical for stress response and development in rice and Arabidopsis.</title>
        <authorList>
            <person name="Wang Y."/>
            <person name="Pang C."/>
            <person name="Li X."/>
            <person name="Hu Z."/>
            <person name="Lv Z."/>
            <person name="Zheng B."/>
            <person name="Chen P."/>
        </authorList>
    </citation>
    <scope>GENE FAMILY</scope>
    <scope>NOMENCLATURE</scope>
</reference>
<protein>
    <recommendedName>
        <fullName evidence="10">rRNA (cytosine-C(5))-methyltransferase NOP2C</fullName>
        <ecNumber evidence="5">2.1.1.-</ecNumber>
    </recommendedName>
    <alternativeName>
        <fullName evidence="8">Nucleolar protein 2C</fullName>
    </alternativeName>
    <alternativeName>
        <fullName evidence="9">tRNA methyltransferase 4f</fullName>
        <shortName evidence="9">AtTRM4f</shortName>
    </alternativeName>
</protein>
<name>NOP2C_ARATH</name>
<dbReference type="EC" id="2.1.1.-" evidence="5"/>
<dbReference type="EMBL" id="AC007592">
    <property type="protein sequence ID" value="AAF24825.1"/>
    <property type="status" value="ALT_SEQ"/>
    <property type="molecule type" value="Genomic_DNA"/>
</dbReference>
<dbReference type="EMBL" id="AC007592">
    <property type="protein sequence ID" value="AAF24826.1"/>
    <property type="status" value="ALT_SEQ"/>
    <property type="molecule type" value="Genomic_DNA"/>
</dbReference>
<dbReference type="EMBL" id="CP002684">
    <property type="protein sequence ID" value="AEE28005.1"/>
    <property type="molecule type" value="Genomic_DNA"/>
</dbReference>
<dbReference type="EMBL" id="BT006450">
    <property type="protein sequence ID" value="AAP21258.1"/>
    <property type="molecule type" value="mRNA"/>
</dbReference>
<dbReference type="EMBL" id="AK227718">
    <property type="protein sequence ID" value="BAE99704.1"/>
    <property type="molecule type" value="mRNA"/>
</dbReference>
<dbReference type="PIR" id="A86201">
    <property type="entry name" value="A86201"/>
</dbReference>
<dbReference type="RefSeq" id="NP_172143.3">
    <property type="nucleotide sequence ID" value="NM_100535.4"/>
</dbReference>
<dbReference type="SMR" id="Q84MA1"/>
<dbReference type="FunCoup" id="Q84MA1">
    <property type="interactions" value="2362"/>
</dbReference>
<dbReference type="STRING" id="3702.Q84MA1"/>
<dbReference type="PaxDb" id="3702-AT1G06560.1"/>
<dbReference type="ProteomicsDB" id="185604"/>
<dbReference type="EnsemblPlants" id="AT1G06560.1">
    <property type="protein sequence ID" value="AT1G06560.1"/>
    <property type="gene ID" value="AT1G06560"/>
</dbReference>
<dbReference type="GeneID" id="837167"/>
<dbReference type="Gramene" id="AT1G06560.1">
    <property type="protein sequence ID" value="AT1G06560.1"/>
    <property type="gene ID" value="AT1G06560"/>
</dbReference>
<dbReference type="KEGG" id="ath:AT1G06560"/>
<dbReference type="Araport" id="AT1G06560"/>
<dbReference type="TAIR" id="AT1G06560">
    <property type="gene designation" value="NOP2C"/>
</dbReference>
<dbReference type="eggNOG" id="KOG1122">
    <property type="taxonomic scope" value="Eukaryota"/>
</dbReference>
<dbReference type="HOGENOM" id="CLU_005316_1_0_1"/>
<dbReference type="InParanoid" id="Q84MA1"/>
<dbReference type="OMA" id="GYTEEWL"/>
<dbReference type="PhylomeDB" id="Q84MA1"/>
<dbReference type="PRO" id="PR:Q84MA1"/>
<dbReference type="Proteomes" id="UP000006548">
    <property type="component" value="Chromosome 1"/>
</dbReference>
<dbReference type="ExpressionAtlas" id="Q84MA1">
    <property type="expression patterns" value="baseline and differential"/>
</dbReference>
<dbReference type="GO" id="GO:0005730">
    <property type="term" value="C:nucleolus"/>
    <property type="evidence" value="ECO:0007669"/>
    <property type="project" value="UniProtKB-SubCell"/>
</dbReference>
<dbReference type="GO" id="GO:0003723">
    <property type="term" value="F:RNA binding"/>
    <property type="evidence" value="ECO:0007669"/>
    <property type="project" value="UniProtKB-KW"/>
</dbReference>
<dbReference type="GO" id="GO:0008173">
    <property type="term" value="F:RNA methyltransferase activity"/>
    <property type="evidence" value="ECO:0007669"/>
    <property type="project" value="InterPro"/>
</dbReference>
<dbReference type="GO" id="GO:0001510">
    <property type="term" value="P:RNA methylation"/>
    <property type="evidence" value="ECO:0007669"/>
    <property type="project" value="InterPro"/>
</dbReference>
<dbReference type="GO" id="GO:0006364">
    <property type="term" value="P:rRNA processing"/>
    <property type="evidence" value="ECO:0007669"/>
    <property type="project" value="UniProtKB-KW"/>
</dbReference>
<dbReference type="CDD" id="cd21150">
    <property type="entry name" value="PUA_NSun6-like"/>
    <property type="match status" value="1"/>
</dbReference>
<dbReference type="Gene3D" id="2.30.130.10">
    <property type="entry name" value="PUA domain"/>
    <property type="match status" value="1"/>
</dbReference>
<dbReference type="Gene3D" id="3.40.50.150">
    <property type="entry name" value="Vaccinia Virus protein VP39"/>
    <property type="match status" value="1"/>
</dbReference>
<dbReference type="InterPro" id="IPR049560">
    <property type="entry name" value="MeTrfase_RsmB-F_NOP2_cat"/>
</dbReference>
<dbReference type="InterPro" id="IPR001678">
    <property type="entry name" value="MeTrfase_RsmB-F_NOP2_dom"/>
</dbReference>
<dbReference type="InterPro" id="IPR002478">
    <property type="entry name" value="PUA"/>
</dbReference>
<dbReference type="InterPro" id="IPR015947">
    <property type="entry name" value="PUA-like_sf"/>
</dbReference>
<dbReference type="InterPro" id="IPR036974">
    <property type="entry name" value="PUA_sf"/>
</dbReference>
<dbReference type="InterPro" id="IPR023267">
    <property type="entry name" value="RCMT"/>
</dbReference>
<dbReference type="InterPro" id="IPR018314">
    <property type="entry name" value="RsmB/NOL1/NOP2-like_CS"/>
</dbReference>
<dbReference type="InterPro" id="IPR029063">
    <property type="entry name" value="SAM-dependent_MTases_sf"/>
</dbReference>
<dbReference type="PANTHER" id="PTHR22807">
    <property type="entry name" value="NOP2 YEAST -RELATED NOL1/NOP2/FMU SUN DOMAIN-CONTAINING"/>
    <property type="match status" value="1"/>
</dbReference>
<dbReference type="PANTHER" id="PTHR22807:SF34">
    <property type="entry name" value="TRNA (CYTOSINE(72)-C(5))-METHYLTRANSFERASE NSUN6"/>
    <property type="match status" value="1"/>
</dbReference>
<dbReference type="Pfam" id="PF01189">
    <property type="entry name" value="Methyltr_RsmB-F"/>
    <property type="match status" value="2"/>
</dbReference>
<dbReference type="Pfam" id="PF01472">
    <property type="entry name" value="PUA"/>
    <property type="match status" value="1"/>
</dbReference>
<dbReference type="PRINTS" id="PR02008">
    <property type="entry name" value="RCMTFAMILY"/>
</dbReference>
<dbReference type="SMART" id="SM00359">
    <property type="entry name" value="PUA"/>
    <property type="match status" value="1"/>
</dbReference>
<dbReference type="SUPFAM" id="SSF88697">
    <property type="entry name" value="PUA domain-like"/>
    <property type="match status" value="1"/>
</dbReference>
<dbReference type="SUPFAM" id="SSF53335">
    <property type="entry name" value="S-adenosyl-L-methionine-dependent methyltransferases"/>
    <property type="match status" value="1"/>
</dbReference>
<dbReference type="PROSITE" id="PS01153">
    <property type="entry name" value="NOL1_NOP2_SUN"/>
    <property type="match status" value="1"/>
</dbReference>
<dbReference type="PROSITE" id="PS50890">
    <property type="entry name" value="PUA"/>
    <property type="match status" value="1"/>
</dbReference>
<dbReference type="PROSITE" id="PS51686">
    <property type="entry name" value="SAM_MT_RSMB_NOP"/>
    <property type="match status" value="1"/>
</dbReference>
<proteinExistence type="evidence at transcript level"/>
<feature type="chain" id="PRO_0000448893" description="rRNA (cytosine-C(5))-methyltransferase NOP2C">
    <location>
        <begin position="1"/>
        <end position="599"/>
    </location>
</feature>
<feature type="domain" description="PUA" evidence="4">
    <location>
        <begin position="158"/>
        <end position="265"/>
    </location>
</feature>
<feature type="region of interest" description="Disordered" evidence="6">
    <location>
        <begin position="372"/>
        <end position="454"/>
    </location>
</feature>
<feature type="compositionally biased region" description="Low complexity" evidence="6">
    <location>
        <begin position="378"/>
        <end position="388"/>
    </location>
</feature>
<feature type="compositionally biased region" description="Basic and acidic residues" evidence="6">
    <location>
        <begin position="399"/>
        <end position="412"/>
    </location>
</feature>
<feature type="compositionally biased region" description="Polar residues" evidence="6">
    <location>
        <begin position="413"/>
        <end position="424"/>
    </location>
</feature>
<feature type="compositionally biased region" description="Basic residues" evidence="6">
    <location>
        <begin position="428"/>
        <end position="438"/>
    </location>
</feature>
<feature type="active site" description="Nucleophile" evidence="5">
    <location>
        <position position="516"/>
    </location>
</feature>
<feature type="binding site" evidence="5">
    <location>
        <begin position="304"/>
        <end position="310"/>
    </location>
    <ligand>
        <name>S-adenosyl-L-methionine</name>
        <dbReference type="ChEBI" id="CHEBI:59789"/>
    </ligand>
</feature>
<feature type="binding site" evidence="5">
    <location>
        <position position="328"/>
    </location>
    <ligand>
        <name>S-adenosyl-L-methionine</name>
        <dbReference type="ChEBI" id="CHEBI:59789"/>
    </ligand>
</feature>
<feature type="binding site" evidence="5">
    <location>
        <position position="355"/>
    </location>
    <ligand>
        <name>S-adenosyl-L-methionine</name>
        <dbReference type="ChEBI" id="CHEBI:59789"/>
    </ligand>
</feature>
<feature type="binding site" evidence="5">
    <location>
        <position position="465"/>
    </location>
    <ligand>
        <name>S-adenosyl-L-methionine</name>
        <dbReference type="ChEBI" id="CHEBI:59789"/>
    </ligand>
</feature>
<organism>
    <name type="scientific">Arabidopsis thaliana</name>
    <name type="common">Mouse-ear cress</name>
    <dbReference type="NCBI Taxonomy" id="3702"/>
    <lineage>
        <taxon>Eukaryota</taxon>
        <taxon>Viridiplantae</taxon>
        <taxon>Streptophyta</taxon>
        <taxon>Embryophyta</taxon>
        <taxon>Tracheophyta</taxon>
        <taxon>Spermatophyta</taxon>
        <taxon>Magnoliopsida</taxon>
        <taxon>eudicotyledons</taxon>
        <taxon>Gunneridae</taxon>
        <taxon>Pentapetalae</taxon>
        <taxon>rosids</taxon>
        <taxon>malvids</taxon>
        <taxon>Brassicales</taxon>
        <taxon>Brassicaceae</taxon>
        <taxon>Camelineae</taxon>
        <taxon>Arabidopsis</taxon>
    </lineage>
</organism>
<sequence length="599" mass="65513">MSKARVLLKPSSLTTCLTRAKAFFSSVSQSRSISHQMEMGPSDSERYCYDPVLRWNPEVEDYFTKAYGPDHFARISKALTRPSSYSCIRVNTVKTTSDAVIEKLTKILNDSEEGLKLVQPDGSSPVTKCQIPGLDYVVFVNGSGPHKIEYDSGLENPPKEVLVSRKCAEAVLRGAQVYVPGVLACTAHVEKGDAVAVCVAMEQPGDEGDWSVNMTRGTTLQGLPTDPYYRERSGLYIGMGTAMLSRAGMFRVPNGIAVDLNHRVFRLPSLHNILEGEIFLQNLPSIIVAHALDPQKGERILDMCAAPGGKTTAIAILMNDEGEIVAADRSHNKVLVVQNLSAEMGFTCITTCKLDALKSVCLPTTLNESTILINGDNSSSMTSHSELSSNEEMTSVTSRRSEADKSCEKNDSTEQPNGGDNVSQAYIRKNKGRLKNGRGRTQCQGGRAGKSQGFPPNSFDRVLLDAPCSALGLRPRLFAGLETVVSLRNHGWYQRKMLDQAVQLVRVGGILVYSTCTINPSENEAVVRYALDKYRFLSLAPQHPRIGGPGLVGRCEFPDGYIEEWLKPGEEELVQKFDPSSELDTIGFFIAKFSVGPKD</sequence>
<accession>Q84MA1</accession>
<accession>Q9SHJ9</accession>
<accession>Q9SHK0</accession>
<gene>
    <name evidence="8" type="primary">NOP2C</name>
    <name evidence="9" type="synonym">TRM4f</name>
    <name evidence="11" type="ordered locus">At1g06560</name>
    <name evidence="13" type="ORF">F12K11.10</name>
    <name evidence="12" type="ORF">F12K11.11</name>
</gene>
<keyword id="KW-0489">Methyltransferase</keyword>
<keyword id="KW-0539">Nucleus</keyword>
<keyword id="KW-1185">Reference proteome</keyword>
<keyword id="KW-0690">Ribosome biogenesis</keyword>
<keyword id="KW-0694">RNA-binding</keyword>
<keyword id="KW-0698">rRNA processing</keyword>
<keyword id="KW-0949">S-adenosyl-L-methionine</keyword>
<keyword id="KW-0808">Transferase</keyword>
<comment type="function">
    <text evidence="2 3">Involved in ribosomal large subunit assembly (By similarity). S-adenosyl-L-methionine-dependent methyltransferase that may methylates the C(5) position of cytosine in rRNA (By similarity). May play a role in the regulation of the cell cycle and the increased nucleolar activity that is associated with the cell proliferation (By similarity). Seems involved in the regulation of cell proliferation (By similarity).</text>
</comment>
<comment type="catalytic activity">
    <reaction evidence="3">
        <text>a cytidine in rRNA + S-adenosyl-L-methionine = a 5-methylcytidine in rRNA + S-adenosyl-L-homocysteine + H(+)</text>
        <dbReference type="Rhea" id="RHEA:61484"/>
        <dbReference type="Rhea" id="RHEA-COMP:15836"/>
        <dbReference type="Rhea" id="RHEA-COMP:15837"/>
        <dbReference type="ChEBI" id="CHEBI:15378"/>
        <dbReference type="ChEBI" id="CHEBI:57856"/>
        <dbReference type="ChEBI" id="CHEBI:59789"/>
        <dbReference type="ChEBI" id="CHEBI:74483"/>
        <dbReference type="ChEBI" id="CHEBI:82748"/>
    </reaction>
</comment>
<comment type="subcellular location">
    <subcellularLocation>
        <location evidence="1">Nucleus</location>
        <location evidence="1">Nucleolus</location>
    </subcellularLocation>
</comment>
<comment type="disruption phenotype">
    <text evidence="7">Normal levels of methylation at cytosine 2860 of 25S rRNA.</text>
</comment>
<comment type="similarity">
    <text evidence="10">Belongs to the class I-like SAM-binding methyltransferase superfamily. RsmB/NOP family.</text>
</comment>
<comment type="sequence caution" evidence="10">
    <conflict type="erroneous gene model prediction">
        <sequence resource="EMBL-CDS" id="AAF24825"/>
    </conflict>
</comment>
<comment type="sequence caution" evidence="10">
    <conflict type="erroneous gene model prediction">
        <sequence resource="EMBL-CDS" id="AAF24826"/>
    </conflict>
</comment>